<feature type="chain" id="PRO_0000144107" description="Kappa-casein">
    <location>
        <begin position="1" status="less than"/>
        <end position="122"/>
    </location>
</feature>
<feature type="region of interest" description="Disordered" evidence="4">
    <location>
        <begin position="38"/>
        <end position="57"/>
    </location>
</feature>
<feature type="region of interest" description="Disordered" evidence="4">
    <location>
        <begin position="101"/>
        <end position="122"/>
    </location>
</feature>
<feature type="site" description="Cleavage; by chymosin/rennin" evidence="1">
    <location>
        <begin position="58"/>
        <end position="59"/>
    </location>
</feature>
<feature type="modified residue" description="Phosphothreonine" evidence="2">
    <location>
        <position position="98"/>
    </location>
</feature>
<feature type="modified residue" description="Phosphoserine; alternate" evidence="2">
    <location>
        <position position="102"/>
    </location>
</feature>
<feature type="modified residue" description="Phosphoserine" evidence="3">
    <location>
        <position position="119"/>
    </location>
</feature>
<feature type="glycosylation site" description="O-linked (GalNAc...) threonine" evidence="2">
    <location>
        <position position="84"/>
    </location>
</feature>
<feature type="glycosylation site" description="O-linked (GalNAc...) threonine" evidence="2">
    <location>
        <position position="86"/>
    </location>
</feature>
<feature type="glycosylation site" description="O-linked (GalNAc...) threonine" evidence="2">
    <location>
        <position position="89"/>
    </location>
</feature>
<feature type="glycosylation site" description="O-linked (GalNAc...) threonine" evidence="2">
    <location>
        <position position="95"/>
    </location>
</feature>
<feature type="glycosylation site" description="O-linked (GalNAc...) serine; alternate" evidence="2">
    <location>
        <position position="102"/>
    </location>
</feature>
<feature type="glycosylation site" description="O-linked (GalNAc...) threonine" evidence="2">
    <location>
        <position position="118"/>
    </location>
</feature>
<feature type="non-terminal residue">
    <location>
        <position position="1"/>
    </location>
</feature>
<proteinExistence type="evidence at transcript level"/>
<sequence>VALINNQFLPYPYYAKPGAVRSPAQILQWQVLPNTVPARSCQPQPTTMARHPHPHLSFMAIPPKKNQDKTDIPSINTIATAESTITPTTEAIVDTVATQEASSEVIESAPEAKADQVTSTVV</sequence>
<organism>
    <name type="scientific">Rusa unicolor</name>
    <name type="common">Sambar</name>
    <name type="synonym">Cervus unicolor</name>
    <dbReference type="NCBI Taxonomy" id="662561"/>
    <lineage>
        <taxon>Eukaryota</taxon>
        <taxon>Metazoa</taxon>
        <taxon>Chordata</taxon>
        <taxon>Craniata</taxon>
        <taxon>Vertebrata</taxon>
        <taxon>Euteleostomi</taxon>
        <taxon>Mammalia</taxon>
        <taxon>Eutheria</taxon>
        <taxon>Laurasiatheria</taxon>
        <taxon>Artiodactyla</taxon>
        <taxon>Ruminantia</taxon>
        <taxon>Pecora</taxon>
        <taxon>Cervidae</taxon>
        <taxon>Cervinae</taxon>
        <taxon>Rusa</taxon>
    </lineage>
</organism>
<protein>
    <recommendedName>
        <fullName>Kappa-casein</fullName>
    </recommendedName>
</protein>
<comment type="function">
    <text>Kappa-casein stabilizes micelle formation, preventing casein precipitation in milk.</text>
</comment>
<comment type="subcellular location">
    <subcellularLocation>
        <location>Secreted</location>
    </subcellularLocation>
</comment>
<comment type="tissue specificity">
    <text>Mammary gland specific. Secreted in milk.</text>
</comment>
<comment type="similarity">
    <text evidence="5">Belongs to the kappa-casein family.</text>
</comment>
<dbReference type="EMBL" id="U37508">
    <property type="protein sequence ID" value="AAC48654.1"/>
    <property type="molecule type" value="Genomic_DNA"/>
</dbReference>
<dbReference type="GlyCosmos" id="Q95177">
    <property type="glycosylation" value="6 sites, No reported glycans"/>
</dbReference>
<dbReference type="GO" id="GO:0005615">
    <property type="term" value="C:extracellular space"/>
    <property type="evidence" value="ECO:0007669"/>
    <property type="project" value="TreeGrafter"/>
</dbReference>
<dbReference type="GO" id="GO:0007595">
    <property type="term" value="P:lactation"/>
    <property type="evidence" value="ECO:0007669"/>
    <property type="project" value="TreeGrafter"/>
</dbReference>
<dbReference type="GO" id="GO:0050821">
    <property type="term" value="P:protein stabilization"/>
    <property type="evidence" value="ECO:0007669"/>
    <property type="project" value="TreeGrafter"/>
</dbReference>
<dbReference type="InterPro" id="IPR000117">
    <property type="entry name" value="Casein_kappa"/>
</dbReference>
<dbReference type="PANTHER" id="PTHR11470">
    <property type="entry name" value="KAPPA CASEIN"/>
    <property type="match status" value="1"/>
</dbReference>
<dbReference type="PANTHER" id="PTHR11470:SF2">
    <property type="entry name" value="KAPPA-CASEIN"/>
    <property type="match status" value="1"/>
</dbReference>
<dbReference type="Pfam" id="PF00997">
    <property type="entry name" value="Casein_kappa"/>
    <property type="match status" value="1"/>
</dbReference>
<gene>
    <name type="primary">CSN3</name>
    <name type="synonym">CSN10</name>
    <name type="synonym">CSNK</name>
</gene>
<name>CASK_RUSUN</name>
<reference key="1">
    <citation type="journal article" date="1996" name="Mol. Phylogenet. Evol.">
        <title>K-casein gene phylogeny of higher ruminants (Pecora, Artiodactyla).</title>
        <authorList>
            <person name="Cronin M.A."/>
            <person name="Stuart R."/>
            <person name="Pierson B.J."/>
            <person name="Patton J.C."/>
        </authorList>
    </citation>
    <scope>NUCLEOTIDE SEQUENCE [GENOMIC DNA]</scope>
</reference>
<accession>Q95177</accession>
<evidence type="ECO:0000250" key="1"/>
<evidence type="ECO:0000250" key="2">
    <source>
        <dbReference type="UniProtKB" id="P02668"/>
    </source>
</evidence>
<evidence type="ECO:0000250" key="3">
    <source>
        <dbReference type="UniProtKB" id="P02670"/>
    </source>
</evidence>
<evidence type="ECO:0000256" key="4">
    <source>
        <dbReference type="SAM" id="MobiDB-lite"/>
    </source>
</evidence>
<evidence type="ECO:0000305" key="5"/>
<keyword id="KW-0325">Glycoprotein</keyword>
<keyword id="KW-0494">Milk protein</keyword>
<keyword id="KW-0597">Phosphoprotein</keyword>
<keyword id="KW-0964">Secreted</keyword>